<evidence type="ECO:0000255" key="1">
    <source>
        <dbReference type="HAMAP-Rule" id="MF_00131"/>
    </source>
</evidence>
<dbReference type="EC" id="4.2.1.20" evidence="1"/>
<dbReference type="EMBL" id="AE000513">
    <property type="protein sequence ID" value="AAF10519.1"/>
    <property type="molecule type" value="Genomic_DNA"/>
</dbReference>
<dbReference type="PIR" id="E75455">
    <property type="entry name" value="E75455"/>
</dbReference>
<dbReference type="RefSeq" id="NP_294666.1">
    <property type="nucleotide sequence ID" value="NC_001263.1"/>
</dbReference>
<dbReference type="RefSeq" id="WP_010887587.1">
    <property type="nucleotide sequence ID" value="NC_001263.1"/>
</dbReference>
<dbReference type="SMR" id="Q9RVT0"/>
<dbReference type="FunCoup" id="Q9RVT0">
    <property type="interactions" value="341"/>
</dbReference>
<dbReference type="STRING" id="243230.DR_0942"/>
<dbReference type="PaxDb" id="243230-DR_0942"/>
<dbReference type="EnsemblBacteria" id="AAF10519">
    <property type="protein sequence ID" value="AAF10519"/>
    <property type="gene ID" value="DR_0942"/>
</dbReference>
<dbReference type="GeneID" id="69517187"/>
<dbReference type="KEGG" id="dra:DR_0942"/>
<dbReference type="PATRIC" id="fig|243230.17.peg.1129"/>
<dbReference type="eggNOG" id="COG0159">
    <property type="taxonomic scope" value="Bacteria"/>
</dbReference>
<dbReference type="HOGENOM" id="CLU_016734_0_0_0"/>
<dbReference type="InParanoid" id="Q9RVT0"/>
<dbReference type="OrthoDB" id="9804578at2"/>
<dbReference type="UniPathway" id="UPA00035">
    <property type="reaction ID" value="UER00044"/>
</dbReference>
<dbReference type="Proteomes" id="UP000002524">
    <property type="component" value="Chromosome 1"/>
</dbReference>
<dbReference type="GO" id="GO:0005829">
    <property type="term" value="C:cytosol"/>
    <property type="evidence" value="ECO:0000318"/>
    <property type="project" value="GO_Central"/>
</dbReference>
<dbReference type="GO" id="GO:0004834">
    <property type="term" value="F:tryptophan synthase activity"/>
    <property type="evidence" value="ECO:0000318"/>
    <property type="project" value="GO_Central"/>
</dbReference>
<dbReference type="GO" id="GO:0000162">
    <property type="term" value="P:L-tryptophan biosynthetic process"/>
    <property type="evidence" value="ECO:0000318"/>
    <property type="project" value="GO_Central"/>
</dbReference>
<dbReference type="CDD" id="cd04724">
    <property type="entry name" value="Tryptophan_synthase_alpha"/>
    <property type="match status" value="1"/>
</dbReference>
<dbReference type="FunFam" id="3.20.20.70:FF:000037">
    <property type="entry name" value="Tryptophan synthase alpha chain"/>
    <property type="match status" value="1"/>
</dbReference>
<dbReference type="Gene3D" id="3.20.20.70">
    <property type="entry name" value="Aldolase class I"/>
    <property type="match status" value="1"/>
</dbReference>
<dbReference type="HAMAP" id="MF_00131">
    <property type="entry name" value="Trp_synth_alpha"/>
    <property type="match status" value="1"/>
</dbReference>
<dbReference type="InterPro" id="IPR013785">
    <property type="entry name" value="Aldolase_TIM"/>
</dbReference>
<dbReference type="InterPro" id="IPR011060">
    <property type="entry name" value="RibuloseP-bd_barrel"/>
</dbReference>
<dbReference type="InterPro" id="IPR018204">
    <property type="entry name" value="Trp_synthase_alpha_AS"/>
</dbReference>
<dbReference type="InterPro" id="IPR002028">
    <property type="entry name" value="Trp_synthase_suA"/>
</dbReference>
<dbReference type="NCBIfam" id="TIGR00262">
    <property type="entry name" value="trpA"/>
    <property type="match status" value="1"/>
</dbReference>
<dbReference type="PANTHER" id="PTHR43406:SF1">
    <property type="entry name" value="TRYPTOPHAN SYNTHASE ALPHA CHAIN, CHLOROPLASTIC"/>
    <property type="match status" value="1"/>
</dbReference>
<dbReference type="PANTHER" id="PTHR43406">
    <property type="entry name" value="TRYPTOPHAN SYNTHASE, ALPHA CHAIN"/>
    <property type="match status" value="1"/>
</dbReference>
<dbReference type="Pfam" id="PF00290">
    <property type="entry name" value="Trp_syntA"/>
    <property type="match status" value="1"/>
</dbReference>
<dbReference type="SUPFAM" id="SSF51366">
    <property type="entry name" value="Ribulose-phoshate binding barrel"/>
    <property type="match status" value="1"/>
</dbReference>
<dbReference type="PROSITE" id="PS00167">
    <property type="entry name" value="TRP_SYNTHASE_ALPHA"/>
    <property type="match status" value="1"/>
</dbReference>
<sequence>MTATPETATNRGVQRLHAAFARAEAEGRAAFIPFMTGGYPDAARFGEVAGDLLARADIMEVGIPYSDPLGDGPTIQRASEQALAGGTSTRRTLELVRELRQKDDTPIVIMTYINPIYAVGPAEFMRLAQEAGVDGLILPDLPPDQDLEIADLAAQHGLAVTFLIAPTSTPERVKLVAEACTGFLYAVSVTGVTGAREGAALGEVPRMLDLARQYAQRPVVVGFGVKDAATAQQVAQVADGVVVGSAFINAVAAGRDVGALADELAAGCRR</sequence>
<reference key="1">
    <citation type="journal article" date="1999" name="Science">
        <title>Genome sequence of the radioresistant bacterium Deinococcus radiodurans R1.</title>
        <authorList>
            <person name="White O."/>
            <person name="Eisen J.A."/>
            <person name="Heidelberg J.F."/>
            <person name="Hickey E.K."/>
            <person name="Peterson J.D."/>
            <person name="Dodson R.J."/>
            <person name="Haft D.H."/>
            <person name="Gwinn M.L."/>
            <person name="Nelson W.C."/>
            <person name="Richardson D.L."/>
            <person name="Moffat K.S."/>
            <person name="Qin H."/>
            <person name="Jiang L."/>
            <person name="Pamphile W."/>
            <person name="Crosby M."/>
            <person name="Shen M."/>
            <person name="Vamathevan J.J."/>
            <person name="Lam P."/>
            <person name="McDonald L.A."/>
            <person name="Utterback T.R."/>
            <person name="Zalewski C."/>
            <person name="Makarova K.S."/>
            <person name="Aravind L."/>
            <person name="Daly M.J."/>
            <person name="Minton K.W."/>
            <person name="Fleischmann R.D."/>
            <person name="Ketchum K.A."/>
            <person name="Nelson K.E."/>
            <person name="Salzberg S.L."/>
            <person name="Smith H.O."/>
            <person name="Venter J.C."/>
            <person name="Fraser C.M."/>
        </authorList>
    </citation>
    <scope>NUCLEOTIDE SEQUENCE [LARGE SCALE GENOMIC DNA]</scope>
    <source>
        <strain>ATCC 13939 / DSM 20539 / JCM 16871 / CCUG 27074 / LMG 4051 / NBRC 15346 / NCIMB 9279 / VKM B-1422 / R1</strain>
    </source>
</reference>
<comment type="function">
    <text evidence="1">The alpha subunit is responsible for the aldol cleavage of indoleglycerol phosphate to indole and glyceraldehyde 3-phosphate.</text>
</comment>
<comment type="catalytic activity">
    <reaction evidence="1">
        <text>(1S,2R)-1-C-(indol-3-yl)glycerol 3-phosphate + L-serine = D-glyceraldehyde 3-phosphate + L-tryptophan + H2O</text>
        <dbReference type="Rhea" id="RHEA:10532"/>
        <dbReference type="ChEBI" id="CHEBI:15377"/>
        <dbReference type="ChEBI" id="CHEBI:33384"/>
        <dbReference type="ChEBI" id="CHEBI:57912"/>
        <dbReference type="ChEBI" id="CHEBI:58866"/>
        <dbReference type="ChEBI" id="CHEBI:59776"/>
        <dbReference type="EC" id="4.2.1.20"/>
    </reaction>
</comment>
<comment type="pathway">
    <text evidence="1">Amino-acid biosynthesis; L-tryptophan biosynthesis; L-tryptophan from chorismate: step 5/5.</text>
</comment>
<comment type="subunit">
    <text evidence="1">Tetramer of two alpha and two beta chains.</text>
</comment>
<comment type="similarity">
    <text evidence="1">Belongs to the TrpA family.</text>
</comment>
<protein>
    <recommendedName>
        <fullName evidence="1">Tryptophan synthase alpha chain</fullName>
        <ecNumber evidence="1">4.2.1.20</ecNumber>
    </recommendedName>
</protein>
<organism>
    <name type="scientific">Deinococcus radiodurans (strain ATCC 13939 / DSM 20539 / JCM 16871 / CCUG 27074 / LMG 4051 / NBRC 15346 / NCIMB 9279 / VKM B-1422 / R1)</name>
    <dbReference type="NCBI Taxonomy" id="243230"/>
    <lineage>
        <taxon>Bacteria</taxon>
        <taxon>Thermotogati</taxon>
        <taxon>Deinococcota</taxon>
        <taxon>Deinococci</taxon>
        <taxon>Deinococcales</taxon>
        <taxon>Deinococcaceae</taxon>
        <taxon>Deinococcus</taxon>
    </lineage>
</organism>
<gene>
    <name evidence="1" type="primary">trpA</name>
    <name type="ordered locus">DR_0942</name>
</gene>
<name>TRPA_DEIRA</name>
<proteinExistence type="inferred from homology"/>
<keyword id="KW-0028">Amino-acid biosynthesis</keyword>
<keyword id="KW-0057">Aromatic amino acid biosynthesis</keyword>
<keyword id="KW-0456">Lyase</keyword>
<keyword id="KW-1185">Reference proteome</keyword>
<keyword id="KW-0822">Tryptophan biosynthesis</keyword>
<feature type="chain" id="PRO_0000098775" description="Tryptophan synthase alpha chain">
    <location>
        <begin position="1"/>
        <end position="270"/>
    </location>
</feature>
<feature type="active site" description="Proton acceptor" evidence="1">
    <location>
        <position position="60"/>
    </location>
</feature>
<feature type="active site" description="Proton acceptor" evidence="1">
    <location>
        <position position="71"/>
    </location>
</feature>
<accession>Q9RVT0</accession>